<name>G6PI_BURP0</name>
<dbReference type="EC" id="5.3.1.9" evidence="1"/>
<dbReference type="EMBL" id="CP000572">
    <property type="protein sequence ID" value="ABN89074.1"/>
    <property type="molecule type" value="Genomic_DNA"/>
</dbReference>
<dbReference type="RefSeq" id="WP_004531409.1">
    <property type="nucleotide sequence ID" value="NC_009076.1"/>
</dbReference>
<dbReference type="SMR" id="A3NW90"/>
<dbReference type="KEGG" id="bpl:BURPS1106A_2347"/>
<dbReference type="HOGENOM" id="CLU_017947_3_1_4"/>
<dbReference type="UniPathway" id="UPA00109">
    <property type="reaction ID" value="UER00181"/>
</dbReference>
<dbReference type="UniPathway" id="UPA00138"/>
<dbReference type="Proteomes" id="UP000006738">
    <property type="component" value="Chromosome I"/>
</dbReference>
<dbReference type="GO" id="GO:0005829">
    <property type="term" value="C:cytosol"/>
    <property type="evidence" value="ECO:0007669"/>
    <property type="project" value="TreeGrafter"/>
</dbReference>
<dbReference type="GO" id="GO:0097367">
    <property type="term" value="F:carbohydrate derivative binding"/>
    <property type="evidence" value="ECO:0007669"/>
    <property type="project" value="InterPro"/>
</dbReference>
<dbReference type="GO" id="GO:0004347">
    <property type="term" value="F:glucose-6-phosphate isomerase activity"/>
    <property type="evidence" value="ECO:0007669"/>
    <property type="project" value="UniProtKB-UniRule"/>
</dbReference>
<dbReference type="GO" id="GO:0048029">
    <property type="term" value="F:monosaccharide binding"/>
    <property type="evidence" value="ECO:0007669"/>
    <property type="project" value="TreeGrafter"/>
</dbReference>
<dbReference type="GO" id="GO:0006094">
    <property type="term" value="P:gluconeogenesis"/>
    <property type="evidence" value="ECO:0007669"/>
    <property type="project" value="UniProtKB-UniRule"/>
</dbReference>
<dbReference type="GO" id="GO:0051156">
    <property type="term" value="P:glucose 6-phosphate metabolic process"/>
    <property type="evidence" value="ECO:0007669"/>
    <property type="project" value="TreeGrafter"/>
</dbReference>
<dbReference type="GO" id="GO:0006096">
    <property type="term" value="P:glycolytic process"/>
    <property type="evidence" value="ECO:0007669"/>
    <property type="project" value="UniProtKB-UniRule"/>
</dbReference>
<dbReference type="CDD" id="cd05015">
    <property type="entry name" value="SIS_PGI_1"/>
    <property type="match status" value="1"/>
</dbReference>
<dbReference type="CDD" id="cd05016">
    <property type="entry name" value="SIS_PGI_2"/>
    <property type="match status" value="1"/>
</dbReference>
<dbReference type="Gene3D" id="1.10.1390.10">
    <property type="match status" value="1"/>
</dbReference>
<dbReference type="Gene3D" id="3.40.50.10490">
    <property type="entry name" value="Glucose-6-phosphate isomerase like protein, domain 1"/>
    <property type="match status" value="2"/>
</dbReference>
<dbReference type="HAMAP" id="MF_00473">
    <property type="entry name" value="G6P_isomerase"/>
    <property type="match status" value="1"/>
</dbReference>
<dbReference type="InterPro" id="IPR001672">
    <property type="entry name" value="G6P_Isomerase"/>
</dbReference>
<dbReference type="InterPro" id="IPR023096">
    <property type="entry name" value="G6P_Isomerase_C"/>
</dbReference>
<dbReference type="InterPro" id="IPR018189">
    <property type="entry name" value="Phosphoglucose_isomerase_CS"/>
</dbReference>
<dbReference type="InterPro" id="IPR046348">
    <property type="entry name" value="SIS_dom_sf"/>
</dbReference>
<dbReference type="InterPro" id="IPR035476">
    <property type="entry name" value="SIS_PGI_1"/>
</dbReference>
<dbReference type="InterPro" id="IPR035482">
    <property type="entry name" value="SIS_PGI_2"/>
</dbReference>
<dbReference type="NCBIfam" id="NF001211">
    <property type="entry name" value="PRK00179.1"/>
    <property type="match status" value="1"/>
</dbReference>
<dbReference type="PANTHER" id="PTHR11469">
    <property type="entry name" value="GLUCOSE-6-PHOSPHATE ISOMERASE"/>
    <property type="match status" value="1"/>
</dbReference>
<dbReference type="PANTHER" id="PTHR11469:SF1">
    <property type="entry name" value="GLUCOSE-6-PHOSPHATE ISOMERASE"/>
    <property type="match status" value="1"/>
</dbReference>
<dbReference type="Pfam" id="PF00342">
    <property type="entry name" value="PGI"/>
    <property type="match status" value="1"/>
</dbReference>
<dbReference type="PRINTS" id="PR00662">
    <property type="entry name" value="G6PISOMERASE"/>
</dbReference>
<dbReference type="SUPFAM" id="SSF53697">
    <property type="entry name" value="SIS domain"/>
    <property type="match status" value="1"/>
</dbReference>
<dbReference type="PROSITE" id="PS00765">
    <property type="entry name" value="P_GLUCOSE_ISOMERASE_1"/>
    <property type="match status" value="1"/>
</dbReference>
<dbReference type="PROSITE" id="PS00174">
    <property type="entry name" value="P_GLUCOSE_ISOMERASE_2"/>
    <property type="match status" value="1"/>
</dbReference>
<dbReference type="PROSITE" id="PS51463">
    <property type="entry name" value="P_GLUCOSE_ISOMERASE_3"/>
    <property type="match status" value="1"/>
</dbReference>
<accession>A3NW90</accession>
<organism>
    <name type="scientific">Burkholderia pseudomallei (strain 1106a)</name>
    <dbReference type="NCBI Taxonomy" id="357348"/>
    <lineage>
        <taxon>Bacteria</taxon>
        <taxon>Pseudomonadati</taxon>
        <taxon>Pseudomonadota</taxon>
        <taxon>Betaproteobacteria</taxon>
        <taxon>Burkholderiales</taxon>
        <taxon>Burkholderiaceae</taxon>
        <taxon>Burkholderia</taxon>
        <taxon>pseudomallei group</taxon>
    </lineage>
</organism>
<keyword id="KW-0963">Cytoplasm</keyword>
<keyword id="KW-0312">Gluconeogenesis</keyword>
<keyword id="KW-0324">Glycolysis</keyword>
<keyword id="KW-0413">Isomerase</keyword>
<protein>
    <recommendedName>
        <fullName evidence="1">Glucose-6-phosphate isomerase</fullName>
        <shortName evidence="1">GPI</shortName>
        <ecNumber evidence="1">5.3.1.9</ecNumber>
    </recommendedName>
    <alternativeName>
        <fullName evidence="1">Phosphoglucose isomerase</fullName>
        <shortName evidence="1">PGI</shortName>
    </alternativeName>
    <alternativeName>
        <fullName evidence="1">Phosphohexose isomerase</fullName>
        <shortName evidence="1">PHI</shortName>
    </alternativeName>
</protein>
<reference key="1">
    <citation type="journal article" date="2010" name="Genome Biol. Evol.">
        <title>Continuing evolution of Burkholderia mallei through genome reduction and large-scale rearrangements.</title>
        <authorList>
            <person name="Losada L."/>
            <person name="Ronning C.M."/>
            <person name="DeShazer D."/>
            <person name="Woods D."/>
            <person name="Fedorova N."/>
            <person name="Kim H.S."/>
            <person name="Shabalina S.A."/>
            <person name="Pearson T.R."/>
            <person name="Brinkac L."/>
            <person name="Tan P."/>
            <person name="Nandi T."/>
            <person name="Crabtree J."/>
            <person name="Badger J."/>
            <person name="Beckstrom-Sternberg S."/>
            <person name="Saqib M."/>
            <person name="Schutzer S.E."/>
            <person name="Keim P."/>
            <person name="Nierman W.C."/>
        </authorList>
    </citation>
    <scope>NUCLEOTIDE SEQUENCE [LARGE SCALE GENOMIC DNA]</scope>
    <source>
        <strain>1106a</strain>
    </source>
</reference>
<gene>
    <name evidence="1" type="primary">pgi</name>
    <name type="ordered locus">BURPS1106A_2347</name>
</gene>
<proteinExistence type="inferred from homology"/>
<feature type="chain" id="PRO_1000013949" description="Glucose-6-phosphate isomerase">
    <location>
        <begin position="1"/>
        <end position="540"/>
    </location>
</feature>
<feature type="active site" description="Proton donor" evidence="1">
    <location>
        <position position="350"/>
    </location>
</feature>
<feature type="active site" evidence="1">
    <location>
        <position position="381"/>
    </location>
</feature>
<feature type="active site" evidence="1">
    <location>
        <position position="503"/>
    </location>
</feature>
<sequence length="540" mass="58785">MTLNSLPVWPALQAHYEEIRDAHLRDWFAPANDRAPTRAERFTFEGGGLAADFSKNRLTDATLALLVRLAREAGVEARRDAMFAGETVNPTEGRAALHTALRANAPDAPFQAQVAAERAKMARFADAVRSGAWTGYTGKRIRHVVNIGIGGSDLGPKMVVHALHHVATPDIATHFVSNVDGADLARVLERIDPEATLAIIVSKTFTTLETMTNARSLRDWFVANGCPEGALAKHFVGVSANPAEVVKFGIAEANVFEMWDWVGGRYSLWSAVGLSIMIAIGPERFDELLAGARDMDEHFRTAPLERNLPVLQGLVGIWYRNFFGAQSYLVAPYSEALHYLPSYLQQLEMESNGKSARIDGAFVDYPTSAVTWGEPGTNGQHAFFQMLHQGPTLVPIDFIAVLTPEHPLASHHPKLLANCFAQSEALMLGRTLDEARKIAGPAKPELAPHLTFPGNRPTTTLLVDALTPRTLGALIALYEHKVLVQAAVWNINPFDQWGVELGKILGKVVEADLTAAQVDPAKHDSSTSALIARARKALGE</sequence>
<evidence type="ECO:0000255" key="1">
    <source>
        <dbReference type="HAMAP-Rule" id="MF_00473"/>
    </source>
</evidence>
<comment type="function">
    <text evidence="1">Catalyzes the reversible isomerization of glucose-6-phosphate to fructose-6-phosphate.</text>
</comment>
<comment type="catalytic activity">
    <reaction evidence="1">
        <text>alpha-D-glucose 6-phosphate = beta-D-fructose 6-phosphate</text>
        <dbReference type="Rhea" id="RHEA:11816"/>
        <dbReference type="ChEBI" id="CHEBI:57634"/>
        <dbReference type="ChEBI" id="CHEBI:58225"/>
        <dbReference type="EC" id="5.3.1.9"/>
    </reaction>
</comment>
<comment type="pathway">
    <text evidence="1">Carbohydrate biosynthesis; gluconeogenesis.</text>
</comment>
<comment type="pathway">
    <text evidence="1">Carbohydrate degradation; glycolysis; D-glyceraldehyde 3-phosphate and glycerone phosphate from D-glucose: step 2/4.</text>
</comment>
<comment type="subcellular location">
    <subcellularLocation>
        <location evidence="1">Cytoplasm</location>
    </subcellularLocation>
</comment>
<comment type="similarity">
    <text evidence="1">Belongs to the GPI family.</text>
</comment>